<accession>P59806</accession>
<proteinExistence type="inferred from homology"/>
<comment type="similarity">
    <text evidence="1">Belongs to the LarC family.</text>
</comment>
<name>YA177_RHOBA</name>
<gene>
    <name type="ordered locus">RB10177</name>
</gene>
<protein>
    <recommendedName>
        <fullName evidence="1">Putative nickel insertion protein</fullName>
    </recommendedName>
</protein>
<evidence type="ECO:0000255" key="1">
    <source>
        <dbReference type="HAMAP-Rule" id="MF_01074"/>
    </source>
</evidence>
<evidence type="ECO:0000256" key="2">
    <source>
        <dbReference type="SAM" id="MobiDB-lite"/>
    </source>
</evidence>
<dbReference type="EMBL" id="BX294151">
    <property type="protein sequence ID" value="CAD78745.1"/>
    <property type="molecule type" value="Genomic_DNA"/>
</dbReference>
<dbReference type="RefSeq" id="NP_869288.1">
    <property type="nucleotide sequence ID" value="NC_005027.1"/>
</dbReference>
<dbReference type="RefSeq" id="WP_011122655.1">
    <property type="nucleotide sequence ID" value="NC_005027.1"/>
</dbReference>
<dbReference type="SMR" id="P59806"/>
<dbReference type="STRING" id="243090.RB10177"/>
<dbReference type="EnsemblBacteria" id="CAD78745">
    <property type="protein sequence ID" value="CAD78745"/>
    <property type="gene ID" value="RB10177"/>
</dbReference>
<dbReference type="KEGG" id="rba:RB10177"/>
<dbReference type="PATRIC" id="fig|243090.15.peg.4911"/>
<dbReference type="eggNOG" id="COG1641">
    <property type="taxonomic scope" value="Bacteria"/>
</dbReference>
<dbReference type="HOGENOM" id="CLU_028523_2_1_0"/>
<dbReference type="InParanoid" id="P59806"/>
<dbReference type="OrthoDB" id="9765625at2"/>
<dbReference type="Proteomes" id="UP000001025">
    <property type="component" value="Chromosome"/>
</dbReference>
<dbReference type="GO" id="GO:0016829">
    <property type="term" value="F:lyase activity"/>
    <property type="evidence" value="ECO:0007669"/>
    <property type="project" value="UniProtKB-UniRule"/>
</dbReference>
<dbReference type="GO" id="GO:0016151">
    <property type="term" value="F:nickel cation binding"/>
    <property type="evidence" value="ECO:0007669"/>
    <property type="project" value="UniProtKB-UniRule"/>
</dbReference>
<dbReference type="Gene3D" id="3.30.70.1380">
    <property type="entry name" value="Transcriptional regulatory protein pf0864 domain like"/>
    <property type="match status" value="1"/>
</dbReference>
<dbReference type="HAMAP" id="MF_01074">
    <property type="entry name" value="LarC"/>
    <property type="match status" value="1"/>
</dbReference>
<dbReference type="InterPro" id="IPR002822">
    <property type="entry name" value="Ni_insertion"/>
</dbReference>
<dbReference type="NCBIfam" id="TIGR00299">
    <property type="entry name" value="nickel pincer cofactor biosynthesis protein LarC"/>
    <property type="match status" value="1"/>
</dbReference>
<dbReference type="PANTHER" id="PTHR36566">
    <property type="entry name" value="NICKEL INSERTION PROTEIN-RELATED"/>
    <property type="match status" value="1"/>
</dbReference>
<dbReference type="PANTHER" id="PTHR36566:SF1">
    <property type="entry name" value="PYRIDINIUM-3,5-BISTHIOCARBOXYLIC ACID MONONUCLEOTIDE NICKEL INSERTION PROTEIN"/>
    <property type="match status" value="1"/>
</dbReference>
<dbReference type="Pfam" id="PF01969">
    <property type="entry name" value="Ni_insertion"/>
    <property type="match status" value="1"/>
</dbReference>
<keyword id="KW-0533">Nickel</keyword>
<keyword id="KW-1185">Reference proteome</keyword>
<reference key="1">
    <citation type="journal article" date="2003" name="Proc. Natl. Acad. Sci. U.S.A.">
        <title>Complete genome sequence of the marine planctomycete Pirellula sp. strain 1.</title>
        <authorList>
            <person name="Gloeckner F.O."/>
            <person name="Kube M."/>
            <person name="Bauer M."/>
            <person name="Teeling H."/>
            <person name="Lombardot T."/>
            <person name="Ludwig W."/>
            <person name="Gade D."/>
            <person name="Beck A."/>
            <person name="Borzym K."/>
            <person name="Heitmann K."/>
            <person name="Rabus R."/>
            <person name="Schlesner H."/>
            <person name="Amann R."/>
            <person name="Reinhardt R."/>
        </authorList>
    </citation>
    <scope>NUCLEOTIDE SEQUENCE [LARGE SCALE GENOMIC DNA]</scope>
    <source>
        <strain>DSM 10527 / NCIMB 13988 / SH1</strain>
    </source>
</reference>
<feature type="chain" id="PRO_0000146850" description="Putative nickel insertion protein">
    <location>
        <begin position="1"/>
        <end position="396"/>
    </location>
</feature>
<feature type="region of interest" description="Disordered" evidence="2">
    <location>
        <begin position="333"/>
        <end position="355"/>
    </location>
</feature>
<sequence length="396" mass="42009">MTKTLHFDCLSGISGDMTLGALIDLGVSVDQIQQGLHSLNLPDLKLRTEEVKKCGFRAVQIHIDHPPEKAHRHLHHIDAMIDEATEINDSAKALAKKIFLCVGEAEAKVHGCSLRKVHFHEVGAIDSIADIVGVAIAIDALDVQHATSSTIPTGTGAITIDHGRVAVPAPATAEILTGVPLMACDIESELTTPTGAAIIKTLARSFGPPPAMTPLRVGYGSGTRDLEGQANVLRVTLGELTEASSSQGQIETDRVTLLESNIDDATAEQLANVSELLMSAGALDVWQTPIVMKKGRLATTVSVLCDASRIGALQTLLFTQTSTIGLRRTEMNRSKLARESQTVETPDGPAKGKTVRLPDGTLRFSLENDEVKRLCAATGKSADQIRTEAQAAFAAG</sequence>
<organism>
    <name type="scientific">Rhodopirellula baltica (strain DSM 10527 / NCIMB 13988 / SH1)</name>
    <dbReference type="NCBI Taxonomy" id="243090"/>
    <lineage>
        <taxon>Bacteria</taxon>
        <taxon>Pseudomonadati</taxon>
        <taxon>Planctomycetota</taxon>
        <taxon>Planctomycetia</taxon>
        <taxon>Pirellulales</taxon>
        <taxon>Pirellulaceae</taxon>
        <taxon>Rhodopirellula</taxon>
    </lineage>
</organism>